<sequence>MMPLAVLHVKRLQPELITPAKPTPQETKFLSDIDDQEFLRFQVPIIMCYKDNPSLNKNRNPVKVIREALSRALVYYYPLAGRLREGPNRKLVVDCNGEGILFIEASADVTLEQLGDKILPPCPLLEEFLFNFPGSDGIIGCPLVLVQVTCLTCGGFILALRLNHTMCDAAGLLLFLTAIAEMARGAHAPSILPVWERELLFARDPPRITCAHHEYEDVIGHSDGSYASSNQSNMVQRSFYFGAKEMRVLRKQIPPHLISTCSTFDLITACLWKCRTLALNINPKEAVRVSCIVNARGKHNNVRLPLGYYGNAFAFPAAISKAEPLCKNPLGYALELVKKAKATMNEEYLRSVADLLVLRGRPQYSSTGSYLIVSDNTRAGFGDVNFGWGQPVFAGPVKALDLISFYVQHKNNAEDGILVPMCLPSSAMERFQQELERITQEPKEDICNNLRSTRIMSMM</sequence>
<gene>
    <name evidence="3" type="primary">AAT1GSA</name>
    <name evidence="6" type="ORF">DVH24_026095</name>
</gene>
<organism>
    <name type="scientific">Malus domestica</name>
    <name type="common">Apple</name>
    <name type="synonym">Pyrus malus</name>
    <dbReference type="NCBI Taxonomy" id="3750"/>
    <lineage>
        <taxon>Eukaryota</taxon>
        <taxon>Viridiplantae</taxon>
        <taxon>Streptophyta</taxon>
        <taxon>Embryophyta</taxon>
        <taxon>Tracheophyta</taxon>
        <taxon>Spermatophyta</taxon>
        <taxon>Magnoliopsida</taxon>
        <taxon>eudicotyledons</taxon>
        <taxon>Gunneridae</taxon>
        <taxon>Pentapetalae</taxon>
        <taxon>rosids</taxon>
        <taxon>fabids</taxon>
        <taxon>Rosales</taxon>
        <taxon>Rosaceae</taxon>
        <taxon>Amygdaloideae</taxon>
        <taxon>Maleae</taxon>
        <taxon>Malus</taxon>
    </lineage>
</organism>
<evidence type="ECO:0000250" key="1">
    <source>
        <dbReference type="UniProtKB" id="Q9FI78"/>
    </source>
</evidence>
<evidence type="ECO:0000269" key="2">
    <source>
    </source>
</evidence>
<evidence type="ECO:0000303" key="3">
    <source>
    </source>
</evidence>
<evidence type="ECO:0000305" key="4"/>
<evidence type="ECO:0000305" key="5">
    <source>
    </source>
</evidence>
<evidence type="ECO:0000312" key="6">
    <source>
        <dbReference type="EMBL" id="RXI06959.1"/>
    </source>
</evidence>
<reference key="1">
    <citation type="journal article" date="2014" name="Plant J.">
        <title>The AAT1 locus is critical for the biosynthesis of esters contributing to 'ripe apple' flavour in 'Royal Gala' and 'Granny Smith' apples.</title>
        <authorList>
            <person name="Souleyre E.J.F."/>
            <person name="Chagne D."/>
            <person name="Chen X."/>
            <person name="Tomes S."/>
            <person name="Turner R.M."/>
            <person name="Wang M.Y."/>
            <person name="Maddumage R."/>
            <person name="Hunt M.B."/>
            <person name="Winz R.A."/>
            <person name="Wiedow C."/>
            <person name="Hamiaux C."/>
            <person name="Gardiner S.E."/>
            <person name="Rowan D.D."/>
            <person name="Atkinson R.G."/>
        </authorList>
    </citation>
    <scope>NUCLEOTIDE SEQUENCE [GENOMIC DNA]</scope>
    <scope>FUNCTION</scope>
    <scope>CATALYTIC ACTIVITY</scope>
    <scope>TISSUE SPECIFICITY</scope>
    <scope>DEVELOPMENTAL STAGE</scope>
    <scope>GENE FAMILY</scope>
    <scope>NOMENCLATURE</scope>
    <source>
        <strain>cv. Granny Smith</strain>
    </source>
</reference>
<reference key="2">
    <citation type="journal article" date="2019" name="Nat. Commun.">
        <title>A high-quality apple genome assembly reveals the association of a retrotransposon and red fruit colour.</title>
        <authorList>
            <person name="Zhang L."/>
            <person name="Hu J."/>
            <person name="Han X."/>
            <person name="Li J."/>
            <person name="Gao Y."/>
            <person name="Richards C.M."/>
            <person name="Zhang C."/>
            <person name="Tian Y."/>
            <person name="Liu G."/>
            <person name="Gul H."/>
            <person name="Wang D."/>
            <person name="Tian Y."/>
            <person name="Yang C."/>
            <person name="Meng M."/>
            <person name="Yuan G."/>
            <person name="Kang G."/>
            <person name="Wu Y."/>
            <person name="Wang K."/>
            <person name="Zhang H."/>
            <person name="Wang D."/>
            <person name="Cong P."/>
        </authorList>
    </citation>
    <scope>NUCLEOTIDE SEQUENCE [LARGE SCALE GENOMIC DNA]</scope>
    <source>
        <strain>cv. HFTH1</strain>
        <tissue>Leaf</tissue>
    </source>
</reference>
<feature type="chain" id="PRO_0000451711" description="Alcohol acyl transferase 1 allele GSa">
    <location>
        <begin position="1"/>
        <end position="459"/>
    </location>
</feature>
<feature type="active site" description="Proton acceptor" evidence="1">
    <location>
        <position position="164"/>
    </location>
</feature>
<feature type="active site" description="Proton acceptor" evidence="1">
    <location>
        <position position="385"/>
    </location>
</feature>
<feature type="sequence variant" description="In strain: cv. Granny Smith." evidence="4">
    <original>RIMSMM</original>
    <variation>SQ</variation>
    <location>
        <begin position="454"/>
        <end position="459"/>
    </location>
</feature>
<comment type="function">
    <text evidence="2">Involved in the biosynthesis of volatile esters which confer ripe apple fruit flavor (PubMed:24661745). Alcohol acyl transferase that can use a wide range of alcohols as substrate, including 2-methylbutanol, hexanol and ethanol, to produce esters such as butyl butanoate, butyl hexanoate, hexyl butanoate, ethyl butanoate and ethyl hexanoate and, to some extent, 2-methylbutyl acetate (2MBA), butyl acetate, hexyl acetate and 2-methylbutyl butanoate (2MBB) (PubMed:24661745).</text>
</comment>
<comment type="catalytic activity">
    <reaction evidence="2">
        <text>butan-1-ol + acetyl-CoA = butyl acetate + CoA</text>
        <dbReference type="Rhea" id="RHEA:64632"/>
        <dbReference type="ChEBI" id="CHEBI:28885"/>
        <dbReference type="ChEBI" id="CHEBI:31328"/>
        <dbReference type="ChEBI" id="CHEBI:57287"/>
        <dbReference type="ChEBI" id="CHEBI:57288"/>
    </reaction>
    <physiologicalReaction direction="left-to-right" evidence="2">
        <dbReference type="Rhea" id="RHEA:64633"/>
    </physiologicalReaction>
</comment>
<comment type="catalytic activity">
    <reaction evidence="2">
        <text>butan-1-ol + butanoyl-CoA = butyl butanoate + CoA</text>
        <dbReference type="Rhea" id="RHEA:65400"/>
        <dbReference type="ChEBI" id="CHEBI:28885"/>
        <dbReference type="ChEBI" id="CHEBI:57287"/>
        <dbReference type="ChEBI" id="CHEBI:57371"/>
        <dbReference type="ChEBI" id="CHEBI:87429"/>
    </reaction>
    <physiologicalReaction direction="left-to-right" evidence="2">
        <dbReference type="Rhea" id="RHEA:65401"/>
    </physiologicalReaction>
</comment>
<comment type="catalytic activity">
    <reaction evidence="2">
        <text>butan-1-ol + hexanoyl-CoA = butyl hexanoate + CoA</text>
        <dbReference type="Rhea" id="RHEA:65404"/>
        <dbReference type="ChEBI" id="CHEBI:28885"/>
        <dbReference type="ChEBI" id="CHEBI:57287"/>
        <dbReference type="ChEBI" id="CHEBI:62620"/>
        <dbReference type="ChEBI" id="CHEBI:89561"/>
    </reaction>
    <physiologicalReaction direction="left-to-right" evidence="2">
        <dbReference type="Rhea" id="RHEA:65405"/>
    </physiologicalReaction>
</comment>
<comment type="catalytic activity">
    <reaction evidence="2">
        <text>hexan-1-ol + butanoyl-CoA = hexyl butanoate + CoA</text>
        <dbReference type="Rhea" id="RHEA:65444"/>
        <dbReference type="ChEBI" id="CHEBI:57287"/>
        <dbReference type="ChEBI" id="CHEBI:57371"/>
        <dbReference type="ChEBI" id="CHEBI:87393"/>
        <dbReference type="ChEBI" id="CHEBI:87559"/>
    </reaction>
    <physiologicalReaction direction="left-to-right" evidence="2">
        <dbReference type="Rhea" id="RHEA:65445"/>
    </physiologicalReaction>
</comment>
<comment type="catalytic activity">
    <reaction evidence="2">
        <text>hexan-1-ol + acetyl-CoA = hexyl acetate + CoA</text>
        <dbReference type="Rhea" id="RHEA:65460"/>
        <dbReference type="ChEBI" id="CHEBI:57287"/>
        <dbReference type="ChEBI" id="CHEBI:57288"/>
        <dbReference type="ChEBI" id="CHEBI:87393"/>
        <dbReference type="ChEBI" id="CHEBI:87510"/>
    </reaction>
    <physiologicalReaction direction="left-to-right" evidence="2">
        <dbReference type="Rhea" id="RHEA:65461"/>
    </physiologicalReaction>
</comment>
<comment type="catalytic activity">
    <reaction evidence="2">
        <text>2-methylbutan-1-ol + butanoyl-CoA = 2-methylbutyl butanoate + CoA</text>
        <dbReference type="Rhea" id="RHEA:65464"/>
        <dbReference type="ChEBI" id="CHEBI:48945"/>
        <dbReference type="ChEBI" id="CHEBI:57287"/>
        <dbReference type="ChEBI" id="CHEBI:57371"/>
        <dbReference type="ChEBI" id="CHEBI:156490"/>
    </reaction>
    <physiologicalReaction direction="left-to-right" evidence="2">
        <dbReference type="Rhea" id="RHEA:65465"/>
    </physiologicalReaction>
</comment>
<comment type="catalytic activity">
    <reaction evidence="2">
        <text>ethanol + butanoyl-CoA = ethyl butanoate + CoA</text>
        <dbReference type="Rhea" id="RHEA:65448"/>
        <dbReference type="ChEBI" id="CHEBI:16236"/>
        <dbReference type="ChEBI" id="CHEBI:57287"/>
        <dbReference type="ChEBI" id="CHEBI:57371"/>
        <dbReference type="ChEBI" id="CHEBI:88764"/>
    </reaction>
    <physiologicalReaction direction="left-to-right" evidence="2">
        <dbReference type="Rhea" id="RHEA:65449"/>
    </physiologicalReaction>
</comment>
<comment type="catalytic activity">
    <reaction evidence="2">
        <text>hexanoyl-CoA + ethanol = ethyl hexanoate + CoA</text>
        <dbReference type="Rhea" id="RHEA:65452"/>
        <dbReference type="ChEBI" id="CHEBI:16236"/>
        <dbReference type="ChEBI" id="CHEBI:57287"/>
        <dbReference type="ChEBI" id="CHEBI:62620"/>
        <dbReference type="ChEBI" id="CHEBI:86055"/>
    </reaction>
    <physiologicalReaction direction="left-to-right" evidence="2">
        <dbReference type="Rhea" id="RHEA:65453"/>
    </physiologicalReaction>
</comment>
<comment type="tissue specificity">
    <text evidence="2">Highly expressed in the cortex and skin of ripe fruit.</text>
</comment>
<comment type="developmental stage">
    <text evidence="2">Accumulates progressively during fruit development, but fades out in ripe fruit.</text>
</comment>
<comment type="miscellaneous">
    <text evidence="5">The fruit of cv. Royal Gala exhibits a high ester accumulation, whereas the cv. Granny Smith contains low ester levels; this influences strongly the ripe apple fruit aroma.</text>
</comment>
<comment type="similarity">
    <text evidence="4">Belongs to the plant acyltransferase family.</text>
</comment>
<comment type="online information" name="Protein Spotlight">
    <link uri="https://www.proteinspotlight.org/back_issues/231/"/>
    <text>The intimacy of flavour - Issue 231 of December 2020</text>
</comment>
<name>ATGSA_MALDO</name>
<proteinExistence type="evidence at protein level"/>
<dbReference type="EC" id="2.3.1.-" evidence="2"/>
<dbReference type="EMBL" id="KC291132">
    <property type="protein sequence ID" value="AGW30203.1"/>
    <property type="molecule type" value="Genomic_DNA"/>
</dbReference>
<dbReference type="EMBL" id="RDQH01000328">
    <property type="protein sequence ID" value="RXI06959.1"/>
    <property type="molecule type" value="Genomic_DNA"/>
</dbReference>
<dbReference type="SMR" id="A0A498KFL4"/>
<dbReference type="STRING" id="3750.A0A498KFL4"/>
<dbReference type="Proteomes" id="UP000290289">
    <property type="component" value="Chromosome 2"/>
</dbReference>
<dbReference type="GO" id="GO:0016746">
    <property type="term" value="F:acyltransferase activity"/>
    <property type="evidence" value="ECO:0000314"/>
    <property type="project" value="UniProtKB"/>
</dbReference>
<dbReference type="GO" id="GO:0006066">
    <property type="term" value="P:alcohol metabolic process"/>
    <property type="evidence" value="ECO:0000314"/>
    <property type="project" value="UniProtKB"/>
</dbReference>
<dbReference type="GO" id="GO:0009836">
    <property type="term" value="P:fruit ripening, climacteric"/>
    <property type="evidence" value="ECO:0000270"/>
    <property type="project" value="UniProtKB"/>
</dbReference>
<dbReference type="Gene3D" id="3.30.559.10">
    <property type="entry name" value="Chloramphenicol acetyltransferase-like domain"/>
    <property type="match status" value="2"/>
</dbReference>
<dbReference type="InterPro" id="IPR023213">
    <property type="entry name" value="CAT-like_dom_sf"/>
</dbReference>
<dbReference type="InterPro" id="IPR050898">
    <property type="entry name" value="Plant_acyltransferase"/>
</dbReference>
<dbReference type="PANTHER" id="PTHR31147">
    <property type="entry name" value="ACYL TRANSFERASE 4"/>
    <property type="match status" value="1"/>
</dbReference>
<dbReference type="PANTHER" id="PTHR31147:SF66">
    <property type="entry name" value="OS05G0315700 PROTEIN"/>
    <property type="match status" value="1"/>
</dbReference>
<dbReference type="Pfam" id="PF02458">
    <property type="entry name" value="Transferase"/>
    <property type="match status" value="1"/>
</dbReference>
<protein>
    <recommendedName>
        <fullName evidence="3">Alcohol acyl transferase 1 allele GSa</fullName>
        <shortName evidence="3">AAT1-GSa</shortName>
        <ecNumber evidence="2">2.3.1.-</ecNumber>
    </recommendedName>
</protein>
<accession>A0A498KFL4</accession>
<accession>V9P9T8</accession>
<keyword id="KW-1185">Reference proteome</keyword>
<keyword id="KW-0808">Transferase</keyword>